<keyword id="KW-0067">ATP-binding</keyword>
<keyword id="KW-0150">Chloroplast</keyword>
<keyword id="KW-0547">Nucleotide-binding</keyword>
<keyword id="KW-0934">Plastid</keyword>
<keyword id="KW-0809">Transit peptide</keyword>
<reference key="1">
    <citation type="journal article" date="1991" name="J. Biol. Chem.">
        <title>Organization and expression of two tandemly oriented genes encoding ribulosebisphosphate carboxylase/oxygenase activase in barley.</title>
        <authorList>
            <person name="Rundle S.J."/>
            <person name="Zielinski R.E."/>
        </authorList>
    </citation>
    <scope>NUCLEOTIDE SEQUENCE [GENOMIC DNA / MRNA]</scope>
    <source>
        <strain>cv. Sundance</strain>
        <tissue>Leaf</tissue>
    </source>
</reference>
<organism>
    <name type="scientific">Hordeum vulgare</name>
    <name type="common">Barley</name>
    <dbReference type="NCBI Taxonomy" id="4513"/>
    <lineage>
        <taxon>Eukaryota</taxon>
        <taxon>Viridiplantae</taxon>
        <taxon>Streptophyta</taxon>
        <taxon>Embryophyta</taxon>
        <taxon>Tracheophyta</taxon>
        <taxon>Spermatophyta</taxon>
        <taxon>Magnoliopsida</taxon>
        <taxon>Liliopsida</taxon>
        <taxon>Poales</taxon>
        <taxon>Poaceae</taxon>
        <taxon>BOP clade</taxon>
        <taxon>Pooideae</taxon>
        <taxon>Triticodae</taxon>
        <taxon>Triticeae</taxon>
        <taxon>Hordeinae</taxon>
        <taxon>Hordeum</taxon>
    </lineage>
</organism>
<dbReference type="EMBL" id="M55449">
    <property type="protein sequence ID" value="AAA63162.1"/>
    <property type="molecule type" value="Genomic_DNA"/>
</dbReference>
<dbReference type="EMBL" id="M55448">
    <property type="protein sequence ID" value="AAA62703.1"/>
    <property type="molecule type" value="mRNA"/>
</dbReference>
<dbReference type="PIR" id="A23703">
    <property type="entry name" value="A23703"/>
</dbReference>
<dbReference type="SMR" id="Q42450"/>
<dbReference type="ExpressionAtlas" id="Q42450">
    <property type="expression patterns" value="baseline and differential"/>
</dbReference>
<dbReference type="GO" id="GO:0009570">
    <property type="term" value="C:chloroplast stroma"/>
    <property type="evidence" value="ECO:0007669"/>
    <property type="project" value="UniProtKB-SubCell"/>
</dbReference>
<dbReference type="GO" id="GO:0009579">
    <property type="term" value="C:thylakoid"/>
    <property type="evidence" value="ECO:0007669"/>
    <property type="project" value="TreeGrafter"/>
</dbReference>
<dbReference type="GO" id="GO:0005524">
    <property type="term" value="F:ATP binding"/>
    <property type="evidence" value="ECO:0007669"/>
    <property type="project" value="UniProtKB-KW"/>
</dbReference>
<dbReference type="GO" id="GO:0016887">
    <property type="term" value="F:ATP hydrolysis activity"/>
    <property type="evidence" value="ECO:0007669"/>
    <property type="project" value="InterPro"/>
</dbReference>
<dbReference type="GO" id="GO:0046863">
    <property type="term" value="F:ribulose-1,5-bisphosphate carboxylase/oxygenase activator activity"/>
    <property type="evidence" value="ECO:0007669"/>
    <property type="project" value="TreeGrafter"/>
</dbReference>
<dbReference type="FunFam" id="1.10.8.1070:FF:000001">
    <property type="entry name" value="Ribulose bisphosphate carboxylase/oxygenase activase, chloroplastic"/>
    <property type="match status" value="1"/>
</dbReference>
<dbReference type="FunFam" id="3.40.50.300:FF:000258">
    <property type="entry name" value="Ribulose bisphosphate carboxylase/oxygenase activase, chloroplastic"/>
    <property type="match status" value="1"/>
</dbReference>
<dbReference type="Gene3D" id="1.10.8.1070">
    <property type="match status" value="1"/>
</dbReference>
<dbReference type="Gene3D" id="3.40.50.300">
    <property type="entry name" value="P-loop containing nucleotide triphosphate hydrolases"/>
    <property type="match status" value="1"/>
</dbReference>
<dbReference type="InterPro" id="IPR003959">
    <property type="entry name" value="ATPase_AAA_core"/>
</dbReference>
<dbReference type="InterPro" id="IPR027417">
    <property type="entry name" value="P-loop_NTPase"/>
</dbReference>
<dbReference type="InterPro" id="IPR044960">
    <property type="entry name" value="RCA-like"/>
</dbReference>
<dbReference type="InterPro" id="IPR048571">
    <property type="entry name" value="RuBisCO_activase_AAA_helical"/>
</dbReference>
<dbReference type="PANTHER" id="PTHR32429">
    <property type="match status" value="1"/>
</dbReference>
<dbReference type="PANTHER" id="PTHR32429:SF32">
    <property type="entry name" value="RIBULOSE BISPHOSPHATE CARBOXYLASE_OXYGENASE ACTIVASE, CHLOROPLASTIC"/>
    <property type="match status" value="1"/>
</dbReference>
<dbReference type="Pfam" id="PF00004">
    <property type="entry name" value="AAA"/>
    <property type="match status" value="1"/>
</dbReference>
<dbReference type="Pfam" id="PF21228">
    <property type="entry name" value="RuBisCO_activase_AAA_helical"/>
    <property type="match status" value="1"/>
</dbReference>
<dbReference type="SUPFAM" id="SSF52540">
    <property type="entry name" value="P-loop containing nucleoside triphosphate hydrolases"/>
    <property type="match status" value="1"/>
</dbReference>
<protein>
    <recommendedName>
        <fullName>Ribulose bisphosphate carboxylase/oxygenase activase B, chloroplastic</fullName>
        <shortName>RA B</shortName>
        <shortName>RuBisCO activase B</shortName>
    </recommendedName>
</protein>
<gene>
    <name type="primary">RCAB</name>
</gene>
<comment type="function">
    <text>Activation of RuBisCO (ribulose-1,5-bisphosphate carboxylase/oxygenase; EC 4.1.1.39) involves the ATP-dependent carboxylation of the epsilon-amino group of lysine leading to a carbamate structure.</text>
</comment>
<comment type="subcellular location">
    <subcellularLocation>
        <location>Plastid</location>
        <location>Chloroplast stroma</location>
    </subcellularLocation>
</comment>
<comment type="similarity">
    <text evidence="2">Belongs to the RuBisCO activase family.</text>
</comment>
<evidence type="ECO:0000255" key="1"/>
<evidence type="ECO:0000305" key="2"/>
<sequence>MASAFSSTVGAPASTPTIFLGKKVKNYYHGGNKMKSRVVRVMAAKKELDQGKQTDADRWKGLAYDISDDQQDITRGKGIVDSLFQAPMGDGTHEAILSSYEYISQGLRKYDFDNTMDGLYIAPAFMDKLIVHLAKNFMTLPNIKVPLILGIWGGKGQGKSFQCELVFAKMGINPIMMSAGELESGNGEPAKLIRQRYREAADIINKGKMCCLFINDLDAGAGRMGGTTQYTVNNQMVNATLMNIADAPTNVQLPGMYNKEENPRVPIIVTGNDFSTLYAPLIRDGRMEKFYWAPTREDRIGVCKGIFRTDNVPDEAVVRLVDTFPGQSIDFFGALRARVYDDEVRKWVGEIGVENISKRLVNSREGPPTFDQPKMTIEKLMEYGHMLVQEQENVKRVQLADKYLSEAALGQANDDAMKTGAFYGK</sequence>
<accession>Q42450</accession>
<feature type="transit peptide" description="Chloroplast" evidence="1">
    <location>
        <begin position="1"/>
        <end position="43"/>
    </location>
</feature>
<feature type="chain" id="PRO_0000030232" description="Ribulose bisphosphate carboxylase/oxygenase activase B, chloroplastic">
    <location>
        <begin position="44"/>
        <end position="425"/>
    </location>
</feature>
<feature type="binding site" evidence="1">
    <location>
        <begin position="153"/>
        <end position="160"/>
    </location>
    <ligand>
        <name>ATP</name>
        <dbReference type="ChEBI" id="CHEBI:30616"/>
    </ligand>
</feature>
<proteinExistence type="evidence at transcript level"/>
<name>RCAB_HORVU</name>